<reference key="1">
    <citation type="journal article" date="2018" name="Front. Plant Sci.">
        <title>In planta functional analysis and subcellular localization of the oomycete pathogen Plasmopara viticola candidate RXLR effector repertoire.</title>
        <authorList>
            <person name="Liu Y."/>
            <person name="Lan X."/>
            <person name="Song S."/>
            <person name="Yin L."/>
            <person name="Dry I.B."/>
            <person name="Qu J."/>
            <person name="Xiang J."/>
            <person name="Lu J."/>
        </authorList>
    </citation>
    <scope>NUCLEOTIDE SEQUENCE [MRNA]</scope>
    <scope>DOMAIN</scope>
    <scope>FUNCTION</scope>
    <scope>SUBCELLULAR LOCATION</scope>
</reference>
<name>RL128_PLAVT</name>
<keyword id="KW-1048">Host nucleus</keyword>
<keyword id="KW-0964">Secreted</keyword>
<keyword id="KW-0732">Signal</keyword>
<keyword id="KW-0843">Virulence</keyword>
<accession>P0CV54</accession>
<comment type="function">
    <text evidence="2">Secreted effector that dos not suppress the host cell death induced by cell death-inducing proteins.</text>
</comment>
<comment type="subcellular location">
    <subcellularLocation>
        <location evidence="2">Secreted</location>
    </subcellularLocation>
    <subcellularLocation>
        <location evidence="2">Host nucleus</location>
    </subcellularLocation>
    <text evidence="2">Localizes to fiber-like structures within the nucleus.</text>
</comment>
<comment type="domain">
    <text evidence="5">The RxLR-dEER motif acts to carry the protein into the host cell cytoplasm through binding to cell surface phosphatidylinositol-3-phosphate.</text>
</comment>
<comment type="similarity">
    <text evidence="4">Belongs to the RxLR effector family.</text>
</comment>
<sequence length="266" mass="30033">MRGAFYTAIALLIGRSQTAKEIDQTDVSKPYLNVVAIGGKGTKTTPKRYLRDGLAHSATNEERVKANVLSKDAMDLAAEGKDWLSLRLGTVDHSHTPQLKRKVDRLPAITQRRIEKKLTTAKQRVYDRQVKLDDPRYPEYLEMHHNFLDIPKMPPGMSLAEAVVMYNMVNWQSGSIPTGKKATNHLSHLAGRSPLRDVNKALDPTFVAKASEDQLRNAYFVKLQIMYAKVYDFCHSNGCTKKELVSPLEQKVEAKETKLLLPLFKN</sequence>
<dbReference type="GO" id="GO:0005576">
    <property type="term" value="C:extracellular region"/>
    <property type="evidence" value="ECO:0007669"/>
    <property type="project" value="UniProtKB-SubCell"/>
</dbReference>
<dbReference type="GO" id="GO:0042025">
    <property type="term" value="C:host cell nucleus"/>
    <property type="evidence" value="ECO:0007669"/>
    <property type="project" value="UniProtKB-SubCell"/>
</dbReference>
<feature type="signal peptide" evidence="1">
    <location>
        <begin position="1"/>
        <end position="18"/>
    </location>
</feature>
<feature type="chain" id="PRO_0000447963" description="Secreted RxLR effector protein 128">
    <location>
        <begin position="19"/>
        <end position="266"/>
    </location>
</feature>
<feature type="short sequence motif" description="RxLR-dEER" evidence="5">
    <location>
        <begin position="48"/>
        <end position="63"/>
    </location>
</feature>
<proteinExistence type="evidence at transcript level"/>
<organism>
    <name type="scientific">Plasmopara viticola</name>
    <name type="common">Downy mildew of grapevine</name>
    <name type="synonym">Botrytis viticola</name>
    <dbReference type="NCBI Taxonomy" id="143451"/>
    <lineage>
        <taxon>Eukaryota</taxon>
        <taxon>Sar</taxon>
        <taxon>Stramenopiles</taxon>
        <taxon>Oomycota</taxon>
        <taxon>Peronosporales</taxon>
        <taxon>Peronosporaceae</taxon>
        <taxon>Plasmopara</taxon>
    </lineage>
</organism>
<evidence type="ECO:0000255" key="1"/>
<evidence type="ECO:0000269" key="2">
    <source>
    </source>
</evidence>
<evidence type="ECO:0000303" key="3">
    <source>
    </source>
</evidence>
<evidence type="ECO:0000305" key="4"/>
<evidence type="ECO:0000305" key="5">
    <source>
    </source>
</evidence>
<protein>
    <recommendedName>
        <fullName evidence="3">Secreted RxLR effector protein 128</fullName>
    </recommendedName>
</protein>
<gene>
    <name evidence="3" type="primary">RXLR128</name>
</gene>